<evidence type="ECO:0000255" key="1">
    <source>
        <dbReference type="HAMAP-Rule" id="MF_00291"/>
    </source>
</evidence>
<evidence type="ECO:0000305" key="2"/>
<accession>A9ISJ8</accession>
<protein>
    <recommendedName>
        <fullName evidence="1">Small ribosomal subunit protein uS2</fullName>
    </recommendedName>
    <alternativeName>
        <fullName evidence="2">30S ribosomal protein S2</fullName>
    </alternativeName>
</protein>
<reference key="1">
    <citation type="journal article" date="2007" name="Nat. Genet.">
        <title>Genomic analysis of Bartonella identifies type IV secretion systems as host adaptability factors.</title>
        <authorList>
            <person name="Saenz H.L."/>
            <person name="Engel P."/>
            <person name="Stoeckli M.C."/>
            <person name="Lanz C."/>
            <person name="Raddatz G."/>
            <person name="Vayssier-Taussat M."/>
            <person name="Birtles R."/>
            <person name="Schuster S.C."/>
            <person name="Dehio C."/>
        </authorList>
    </citation>
    <scope>NUCLEOTIDE SEQUENCE [LARGE SCALE GENOMIC DNA]</scope>
    <source>
        <strain>CIP 105476 / IBS 506</strain>
    </source>
</reference>
<feature type="chain" id="PRO_0000351978" description="Small ribosomal subunit protein uS2">
    <location>
        <begin position="1"/>
        <end position="266"/>
    </location>
</feature>
<sequence length="266" mass="29385">MALPDFTMHQLLEAGVHFGHQTHRWNPKMTPYIYGQRNNIHIIDLAQTVPLLHQALKLVSDTVARGGRILFVGTKRQASEIIADAANRSAQYYVNARWLGGMLTNWKTISNSIHRLRKLDKILAAEAQGFTKKERLNLERDREKLNRALGGIKDMGSVPDLIFVIDTNKENIALQEAKRLGIPVIAIIDTNCDPDDVTHPIPGNDDASRAISLYCDLFARAALDGIARQQGAMGIDLGAQVDAPVEPVLEEVEPVLEESAVLAVSE</sequence>
<keyword id="KW-0687">Ribonucleoprotein</keyword>
<keyword id="KW-0689">Ribosomal protein</keyword>
<gene>
    <name evidence="1" type="primary">rpsB</name>
    <name type="ordered locus">BT_0912</name>
</gene>
<name>RS2_BART1</name>
<comment type="similarity">
    <text evidence="1">Belongs to the universal ribosomal protein uS2 family.</text>
</comment>
<comment type="sequence caution" evidence="2">
    <conflict type="erroneous initiation">
        <sequence resource="EMBL-CDS" id="CAK01310"/>
    </conflict>
</comment>
<proteinExistence type="inferred from homology"/>
<organism>
    <name type="scientific">Bartonella tribocorum (strain CIP 105476 / IBS 506)</name>
    <dbReference type="NCBI Taxonomy" id="382640"/>
    <lineage>
        <taxon>Bacteria</taxon>
        <taxon>Pseudomonadati</taxon>
        <taxon>Pseudomonadota</taxon>
        <taxon>Alphaproteobacteria</taxon>
        <taxon>Hyphomicrobiales</taxon>
        <taxon>Bartonellaceae</taxon>
        <taxon>Bartonella</taxon>
    </lineage>
</organism>
<dbReference type="EMBL" id="AM260525">
    <property type="protein sequence ID" value="CAK01310.1"/>
    <property type="status" value="ALT_INIT"/>
    <property type="molecule type" value="Genomic_DNA"/>
</dbReference>
<dbReference type="RefSeq" id="WP_038473465.1">
    <property type="nucleotide sequence ID" value="NC_010161.1"/>
</dbReference>
<dbReference type="SMR" id="A9ISJ8"/>
<dbReference type="KEGG" id="btr:BT_0912"/>
<dbReference type="eggNOG" id="COG0052">
    <property type="taxonomic scope" value="Bacteria"/>
</dbReference>
<dbReference type="HOGENOM" id="CLU_040318_2_3_5"/>
<dbReference type="Proteomes" id="UP000001592">
    <property type="component" value="Chromosome"/>
</dbReference>
<dbReference type="GO" id="GO:0022627">
    <property type="term" value="C:cytosolic small ribosomal subunit"/>
    <property type="evidence" value="ECO:0007669"/>
    <property type="project" value="TreeGrafter"/>
</dbReference>
<dbReference type="GO" id="GO:0003735">
    <property type="term" value="F:structural constituent of ribosome"/>
    <property type="evidence" value="ECO:0007669"/>
    <property type="project" value="InterPro"/>
</dbReference>
<dbReference type="GO" id="GO:0006412">
    <property type="term" value="P:translation"/>
    <property type="evidence" value="ECO:0007669"/>
    <property type="project" value="UniProtKB-UniRule"/>
</dbReference>
<dbReference type="CDD" id="cd01425">
    <property type="entry name" value="RPS2"/>
    <property type="match status" value="1"/>
</dbReference>
<dbReference type="Gene3D" id="3.40.50.10490">
    <property type="entry name" value="Glucose-6-phosphate isomerase like protein, domain 1"/>
    <property type="match status" value="1"/>
</dbReference>
<dbReference type="Gene3D" id="1.10.287.610">
    <property type="entry name" value="Helix hairpin bin"/>
    <property type="match status" value="1"/>
</dbReference>
<dbReference type="HAMAP" id="MF_00291_B">
    <property type="entry name" value="Ribosomal_uS2_B"/>
    <property type="match status" value="1"/>
</dbReference>
<dbReference type="InterPro" id="IPR001865">
    <property type="entry name" value="Ribosomal_uS2"/>
</dbReference>
<dbReference type="InterPro" id="IPR005706">
    <property type="entry name" value="Ribosomal_uS2_bac/mit/plastid"/>
</dbReference>
<dbReference type="InterPro" id="IPR018130">
    <property type="entry name" value="Ribosomal_uS2_CS"/>
</dbReference>
<dbReference type="InterPro" id="IPR023591">
    <property type="entry name" value="Ribosomal_uS2_flav_dom_sf"/>
</dbReference>
<dbReference type="NCBIfam" id="TIGR01011">
    <property type="entry name" value="rpsB_bact"/>
    <property type="match status" value="1"/>
</dbReference>
<dbReference type="PANTHER" id="PTHR12534">
    <property type="entry name" value="30S RIBOSOMAL PROTEIN S2 PROKARYOTIC AND ORGANELLAR"/>
    <property type="match status" value="1"/>
</dbReference>
<dbReference type="PANTHER" id="PTHR12534:SF0">
    <property type="entry name" value="SMALL RIBOSOMAL SUBUNIT PROTEIN US2M"/>
    <property type="match status" value="1"/>
</dbReference>
<dbReference type="Pfam" id="PF00318">
    <property type="entry name" value="Ribosomal_S2"/>
    <property type="match status" value="1"/>
</dbReference>
<dbReference type="PRINTS" id="PR00395">
    <property type="entry name" value="RIBOSOMALS2"/>
</dbReference>
<dbReference type="SUPFAM" id="SSF52313">
    <property type="entry name" value="Ribosomal protein S2"/>
    <property type="match status" value="1"/>
</dbReference>
<dbReference type="PROSITE" id="PS00962">
    <property type="entry name" value="RIBOSOMAL_S2_1"/>
    <property type="match status" value="1"/>
</dbReference>
<dbReference type="PROSITE" id="PS00963">
    <property type="entry name" value="RIBOSOMAL_S2_2"/>
    <property type="match status" value="1"/>
</dbReference>